<reference key="1">
    <citation type="journal article" date="2002" name="Lancet">
        <title>Genome and virulence determinants of high virulence community-acquired MRSA.</title>
        <authorList>
            <person name="Baba T."/>
            <person name="Takeuchi F."/>
            <person name="Kuroda M."/>
            <person name="Yuzawa H."/>
            <person name="Aoki K."/>
            <person name="Oguchi A."/>
            <person name="Nagai Y."/>
            <person name="Iwama N."/>
            <person name="Asano K."/>
            <person name="Naimi T."/>
            <person name="Kuroda H."/>
            <person name="Cui L."/>
            <person name="Yamamoto K."/>
            <person name="Hiramatsu K."/>
        </authorList>
    </citation>
    <scope>NUCLEOTIDE SEQUENCE [LARGE SCALE GENOMIC DNA]</scope>
    <source>
        <strain>MW2</strain>
    </source>
</reference>
<accession>Q7A1P6</accession>
<sequence>MIIYRQYHHEGAPVYEIITKTFQHVSIKCDDSFSDTEIFKLLSLLQDDIDHMKVS</sequence>
<proteinExistence type="predicted"/>
<protein>
    <recommendedName>
        <fullName>Protein VraX</fullName>
    </recommendedName>
</protein>
<feature type="chain" id="PRO_0000065925" description="Protein VraX">
    <location>
        <begin position="1"/>
        <end position="55"/>
    </location>
</feature>
<organism>
    <name type="scientific">Staphylococcus aureus (strain MW2)</name>
    <dbReference type="NCBI Taxonomy" id="196620"/>
    <lineage>
        <taxon>Bacteria</taxon>
        <taxon>Bacillati</taxon>
        <taxon>Bacillota</taxon>
        <taxon>Bacilli</taxon>
        <taxon>Bacillales</taxon>
        <taxon>Staphylococcaceae</taxon>
        <taxon>Staphylococcus</taxon>
    </lineage>
</organism>
<dbReference type="EMBL" id="BA000033">
    <property type="protein sequence ID" value="BAB94399.1"/>
    <property type="molecule type" value="Genomic_DNA"/>
</dbReference>
<dbReference type="RefSeq" id="WP_000587958.1">
    <property type="nucleotide sequence ID" value="NC_003923.1"/>
</dbReference>
<dbReference type="GeneID" id="98344911"/>
<dbReference type="KEGG" id="sam:MW0534"/>
<dbReference type="HOGENOM" id="CLU_212227_0_0_9"/>
<dbReference type="InterPro" id="IPR035374">
    <property type="entry name" value="VraX"/>
</dbReference>
<dbReference type="Pfam" id="PF17412">
    <property type="entry name" value="VraX"/>
    <property type="match status" value="1"/>
</dbReference>
<gene>
    <name type="primary">vraX</name>
    <name type="ordered locus">MW0534</name>
</gene>
<name>VRAX_STAAW</name>